<dbReference type="EC" id="4.2.1.33" evidence="1"/>
<dbReference type="EMBL" id="CP000474">
    <property type="protein sequence ID" value="ABM10288.1"/>
    <property type="molecule type" value="Genomic_DNA"/>
</dbReference>
<dbReference type="RefSeq" id="WP_011775154.1">
    <property type="nucleotide sequence ID" value="NC_008711.1"/>
</dbReference>
<dbReference type="SMR" id="A1R7K0"/>
<dbReference type="STRING" id="290340.AAur_2486"/>
<dbReference type="KEGG" id="aau:AAur_2486"/>
<dbReference type="eggNOG" id="COG0065">
    <property type="taxonomic scope" value="Bacteria"/>
</dbReference>
<dbReference type="HOGENOM" id="CLU_006714_3_4_11"/>
<dbReference type="OrthoDB" id="9802769at2"/>
<dbReference type="UniPathway" id="UPA00048">
    <property type="reaction ID" value="UER00071"/>
</dbReference>
<dbReference type="Proteomes" id="UP000000637">
    <property type="component" value="Chromosome"/>
</dbReference>
<dbReference type="GO" id="GO:0003861">
    <property type="term" value="F:3-isopropylmalate dehydratase activity"/>
    <property type="evidence" value="ECO:0007669"/>
    <property type="project" value="UniProtKB-UniRule"/>
</dbReference>
<dbReference type="GO" id="GO:0051539">
    <property type="term" value="F:4 iron, 4 sulfur cluster binding"/>
    <property type="evidence" value="ECO:0007669"/>
    <property type="project" value="UniProtKB-KW"/>
</dbReference>
<dbReference type="GO" id="GO:0046872">
    <property type="term" value="F:metal ion binding"/>
    <property type="evidence" value="ECO:0007669"/>
    <property type="project" value="UniProtKB-KW"/>
</dbReference>
<dbReference type="GO" id="GO:0009098">
    <property type="term" value="P:L-leucine biosynthetic process"/>
    <property type="evidence" value="ECO:0007669"/>
    <property type="project" value="UniProtKB-UniRule"/>
</dbReference>
<dbReference type="CDD" id="cd01583">
    <property type="entry name" value="IPMI"/>
    <property type="match status" value="1"/>
</dbReference>
<dbReference type="FunFam" id="3.30.499.10:FF:000007">
    <property type="entry name" value="3-isopropylmalate dehydratase large subunit"/>
    <property type="match status" value="1"/>
</dbReference>
<dbReference type="Gene3D" id="3.30.499.10">
    <property type="entry name" value="Aconitase, domain 3"/>
    <property type="match status" value="2"/>
</dbReference>
<dbReference type="HAMAP" id="MF_01026">
    <property type="entry name" value="LeuC_type1"/>
    <property type="match status" value="1"/>
</dbReference>
<dbReference type="InterPro" id="IPR004430">
    <property type="entry name" value="3-IsopropMal_deHydase_lsu"/>
</dbReference>
<dbReference type="InterPro" id="IPR015931">
    <property type="entry name" value="Acnase/IPM_dHydase_lsu_aba_1/3"/>
</dbReference>
<dbReference type="InterPro" id="IPR001030">
    <property type="entry name" value="Acoase/IPM_deHydtase_lsu_aba"/>
</dbReference>
<dbReference type="InterPro" id="IPR018136">
    <property type="entry name" value="Aconitase_4Fe-4S_BS"/>
</dbReference>
<dbReference type="InterPro" id="IPR036008">
    <property type="entry name" value="Aconitase_4Fe-4S_dom"/>
</dbReference>
<dbReference type="InterPro" id="IPR050067">
    <property type="entry name" value="IPM_dehydratase_rel_enz"/>
</dbReference>
<dbReference type="InterPro" id="IPR033941">
    <property type="entry name" value="IPMI_cat"/>
</dbReference>
<dbReference type="NCBIfam" id="TIGR00170">
    <property type="entry name" value="leuC"/>
    <property type="match status" value="1"/>
</dbReference>
<dbReference type="NCBIfam" id="NF004016">
    <property type="entry name" value="PRK05478.1"/>
    <property type="match status" value="1"/>
</dbReference>
<dbReference type="NCBIfam" id="NF009116">
    <property type="entry name" value="PRK12466.1"/>
    <property type="match status" value="1"/>
</dbReference>
<dbReference type="PANTHER" id="PTHR43822:SF9">
    <property type="entry name" value="3-ISOPROPYLMALATE DEHYDRATASE"/>
    <property type="match status" value="1"/>
</dbReference>
<dbReference type="PANTHER" id="PTHR43822">
    <property type="entry name" value="HOMOACONITASE, MITOCHONDRIAL-RELATED"/>
    <property type="match status" value="1"/>
</dbReference>
<dbReference type="Pfam" id="PF00330">
    <property type="entry name" value="Aconitase"/>
    <property type="match status" value="1"/>
</dbReference>
<dbReference type="PRINTS" id="PR00415">
    <property type="entry name" value="ACONITASE"/>
</dbReference>
<dbReference type="SUPFAM" id="SSF53732">
    <property type="entry name" value="Aconitase iron-sulfur domain"/>
    <property type="match status" value="1"/>
</dbReference>
<dbReference type="PROSITE" id="PS00450">
    <property type="entry name" value="ACONITASE_1"/>
    <property type="match status" value="1"/>
</dbReference>
<dbReference type="PROSITE" id="PS01244">
    <property type="entry name" value="ACONITASE_2"/>
    <property type="match status" value="1"/>
</dbReference>
<accession>A1R7K0</accession>
<reference key="1">
    <citation type="journal article" date="2006" name="PLoS Genet.">
        <title>Secrets of soil survival revealed by the genome sequence of Arthrobacter aurescens TC1.</title>
        <authorList>
            <person name="Mongodin E.F."/>
            <person name="Shapir N."/>
            <person name="Daugherty S.C."/>
            <person name="DeBoy R.T."/>
            <person name="Emerson J.B."/>
            <person name="Shvartzbeyn A."/>
            <person name="Radune D."/>
            <person name="Vamathevan J."/>
            <person name="Riggs F."/>
            <person name="Grinberg V."/>
            <person name="Khouri H.M."/>
            <person name="Wackett L.P."/>
            <person name="Nelson K.E."/>
            <person name="Sadowsky M.J."/>
        </authorList>
    </citation>
    <scope>NUCLEOTIDE SEQUENCE [LARGE SCALE GENOMIC DNA]</scope>
    <source>
        <strain>TC1</strain>
    </source>
</reference>
<organism>
    <name type="scientific">Paenarthrobacter aurescens (strain TC1)</name>
    <dbReference type="NCBI Taxonomy" id="290340"/>
    <lineage>
        <taxon>Bacteria</taxon>
        <taxon>Bacillati</taxon>
        <taxon>Actinomycetota</taxon>
        <taxon>Actinomycetes</taxon>
        <taxon>Micrococcales</taxon>
        <taxon>Micrococcaceae</taxon>
        <taxon>Paenarthrobacter</taxon>
    </lineage>
</organism>
<protein>
    <recommendedName>
        <fullName evidence="1">3-isopropylmalate dehydratase large subunit</fullName>
        <ecNumber evidence="1">4.2.1.33</ecNumber>
    </recommendedName>
    <alternativeName>
        <fullName evidence="1">Alpha-IPM isomerase</fullName>
        <shortName evidence="1">IPMI</shortName>
    </alternativeName>
    <alternativeName>
        <fullName evidence="1">Isopropylmalate isomerase</fullName>
    </alternativeName>
</protein>
<keyword id="KW-0004">4Fe-4S</keyword>
<keyword id="KW-0028">Amino-acid biosynthesis</keyword>
<keyword id="KW-0100">Branched-chain amino acid biosynthesis</keyword>
<keyword id="KW-0408">Iron</keyword>
<keyword id="KW-0411">Iron-sulfur</keyword>
<keyword id="KW-0432">Leucine biosynthesis</keyword>
<keyword id="KW-0456">Lyase</keyword>
<keyword id="KW-0479">Metal-binding</keyword>
<proteinExistence type="inferred from homology"/>
<evidence type="ECO:0000255" key="1">
    <source>
        <dbReference type="HAMAP-Rule" id="MF_01026"/>
    </source>
</evidence>
<comment type="function">
    <text evidence="1">Catalyzes the isomerization between 2-isopropylmalate and 3-isopropylmalate, via the formation of 2-isopropylmaleate.</text>
</comment>
<comment type="catalytic activity">
    <reaction evidence="1">
        <text>(2R,3S)-3-isopropylmalate = (2S)-2-isopropylmalate</text>
        <dbReference type="Rhea" id="RHEA:32287"/>
        <dbReference type="ChEBI" id="CHEBI:1178"/>
        <dbReference type="ChEBI" id="CHEBI:35121"/>
        <dbReference type="EC" id="4.2.1.33"/>
    </reaction>
</comment>
<comment type="cofactor">
    <cofactor evidence="1">
        <name>[4Fe-4S] cluster</name>
        <dbReference type="ChEBI" id="CHEBI:49883"/>
    </cofactor>
    <text evidence="1">Binds 1 [4Fe-4S] cluster per subunit.</text>
</comment>
<comment type="pathway">
    <text evidence="1">Amino-acid biosynthesis; L-leucine biosynthesis; L-leucine from 3-methyl-2-oxobutanoate: step 2/4.</text>
</comment>
<comment type="subunit">
    <text evidence="1">Heterodimer of LeuC and LeuD.</text>
</comment>
<comment type="similarity">
    <text evidence="1">Belongs to the aconitase/IPM isomerase family. LeuC type 1 subfamily.</text>
</comment>
<gene>
    <name evidence="1" type="primary">leuC</name>
    <name type="ordered locus">AAur_2486</name>
</gene>
<sequence length="483" mass="51419">MGKTLAEKVWDAHVVRKGEGEGANAQPDLLFIDLHLIHEVTSPQAFEGLRLAGRPLRRVDLTIATEDHNTPTLDIDKPIADLTSRTQIETLRANCKEFGVRLHSLGDKEQGIVHVVGPQLGLTQPGMTVVCGDSHTSTHGAFGALAMGIGTSEVEHVMATQTLSLKPFKTMAINVEGTLRPGVTAKDIILAVIAKIGTGGGQGYVLEYRGSAIRALSMDARMTICNMSIEAGARAGMVAPDQTTYDYMQGRPHAPEGADWDAAVEYWNTLTTDADATFDVEVDLDADTLEPFVTWGTNPGQGVSLSAKVPSPEDFGDENAKAAAERALQYMGLEAGTPMKDIRVDTVFLGSCTNSRIEDLRVAADIIRGRAKDPNVRMLVVPGSARVRLEAEAEGLDKVFKEFGAEWRFAGCSMCLGMNPDQLEPGERCASTSNRNFEGRQGKGGRTHLVSPVVAAATAVRGTLSSPSDLEPAAAGALTGIAV</sequence>
<feature type="chain" id="PRO_1000063524" description="3-isopropylmalate dehydratase large subunit">
    <location>
        <begin position="1"/>
        <end position="483"/>
    </location>
</feature>
<feature type="binding site" evidence="1">
    <location>
        <position position="352"/>
    </location>
    <ligand>
        <name>[4Fe-4S] cluster</name>
        <dbReference type="ChEBI" id="CHEBI:49883"/>
    </ligand>
</feature>
<feature type="binding site" evidence="1">
    <location>
        <position position="412"/>
    </location>
    <ligand>
        <name>[4Fe-4S] cluster</name>
        <dbReference type="ChEBI" id="CHEBI:49883"/>
    </ligand>
</feature>
<feature type="binding site" evidence="1">
    <location>
        <position position="415"/>
    </location>
    <ligand>
        <name>[4Fe-4S] cluster</name>
        <dbReference type="ChEBI" id="CHEBI:49883"/>
    </ligand>
</feature>
<name>LEUC_PAEAT</name>